<name>RS17_EHRCJ</name>
<organism>
    <name type="scientific">Ehrlichia canis (strain Jake)</name>
    <dbReference type="NCBI Taxonomy" id="269484"/>
    <lineage>
        <taxon>Bacteria</taxon>
        <taxon>Pseudomonadati</taxon>
        <taxon>Pseudomonadota</taxon>
        <taxon>Alphaproteobacteria</taxon>
        <taxon>Rickettsiales</taxon>
        <taxon>Anaplasmataceae</taxon>
        <taxon>Ehrlichia</taxon>
    </lineage>
</organism>
<reference key="1">
    <citation type="journal article" date="2006" name="J. Bacteriol.">
        <title>The genome of the obligately intracellular bacterium Ehrlichia canis reveals themes of complex membrane structure and immune evasion strategies.</title>
        <authorList>
            <person name="Mavromatis K."/>
            <person name="Doyle C.K."/>
            <person name="Lykidis A."/>
            <person name="Ivanova N."/>
            <person name="Francino M.P."/>
            <person name="Chain P."/>
            <person name="Shin M."/>
            <person name="Malfatti S."/>
            <person name="Larimer F."/>
            <person name="Copeland A."/>
            <person name="Detter J.C."/>
            <person name="Land M."/>
            <person name="Richardson P.M."/>
            <person name="Yu X.J."/>
            <person name="Walker D.H."/>
            <person name="McBride J.W."/>
            <person name="Kyrpides N.C."/>
        </authorList>
    </citation>
    <scope>NUCLEOTIDE SEQUENCE [LARGE SCALE GENOMIC DNA]</scope>
    <source>
        <strain>Jake</strain>
    </source>
</reference>
<evidence type="ECO:0000255" key="1">
    <source>
        <dbReference type="HAMAP-Rule" id="MF_01345"/>
    </source>
</evidence>
<evidence type="ECO:0000305" key="2"/>
<gene>
    <name evidence="1" type="primary">rpsQ</name>
    <name type="ordered locus">Ecaj_0603</name>
</gene>
<keyword id="KW-0687">Ribonucleoprotein</keyword>
<keyword id="KW-0689">Ribosomal protein</keyword>
<keyword id="KW-0694">RNA-binding</keyword>
<keyword id="KW-0699">rRNA-binding</keyword>
<comment type="function">
    <text evidence="1">One of the primary rRNA binding proteins, it binds specifically to the 5'-end of 16S ribosomal RNA.</text>
</comment>
<comment type="subunit">
    <text evidence="1">Part of the 30S ribosomal subunit.</text>
</comment>
<comment type="similarity">
    <text evidence="1">Belongs to the universal ribosomal protein uS17 family.</text>
</comment>
<sequence>MKEKKRKGMSNKKVLTGVVVATKCDKTIKVMVSRMVRHKTYKKIVKKRKNYVVHDEYNKCKCGDVVKIQEHIPISATKRWIVI</sequence>
<dbReference type="EMBL" id="CP000107">
    <property type="protein sequence ID" value="AAZ68637.1"/>
    <property type="molecule type" value="Genomic_DNA"/>
</dbReference>
<dbReference type="RefSeq" id="WP_011304715.1">
    <property type="nucleotide sequence ID" value="NC_007354.1"/>
</dbReference>
<dbReference type="SMR" id="Q3YRL8"/>
<dbReference type="FunCoup" id="Q3YRL8">
    <property type="interactions" value="269"/>
</dbReference>
<dbReference type="STRING" id="269484.Ecaj_0603"/>
<dbReference type="KEGG" id="ecn:Ecaj_0603"/>
<dbReference type="eggNOG" id="COG0186">
    <property type="taxonomic scope" value="Bacteria"/>
</dbReference>
<dbReference type="HOGENOM" id="CLU_073626_1_1_5"/>
<dbReference type="InParanoid" id="Q3YRL8"/>
<dbReference type="Proteomes" id="UP000000435">
    <property type="component" value="Chromosome"/>
</dbReference>
<dbReference type="GO" id="GO:0022627">
    <property type="term" value="C:cytosolic small ribosomal subunit"/>
    <property type="evidence" value="ECO:0007669"/>
    <property type="project" value="TreeGrafter"/>
</dbReference>
<dbReference type="GO" id="GO:0019843">
    <property type="term" value="F:rRNA binding"/>
    <property type="evidence" value="ECO:0007669"/>
    <property type="project" value="UniProtKB-UniRule"/>
</dbReference>
<dbReference type="GO" id="GO:0003735">
    <property type="term" value="F:structural constituent of ribosome"/>
    <property type="evidence" value="ECO:0007669"/>
    <property type="project" value="InterPro"/>
</dbReference>
<dbReference type="GO" id="GO:0006412">
    <property type="term" value="P:translation"/>
    <property type="evidence" value="ECO:0007669"/>
    <property type="project" value="UniProtKB-UniRule"/>
</dbReference>
<dbReference type="CDD" id="cd00364">
    <property type="entry name" value="Ribosomal_uS17"/>
    <property type="match status" value="1"/>
</dbReference>
<dbReference type="Gene3D" id="2.40.50.140">
    <property type="entry name" value="Nucleic acid-binding proteins"/>
    <property type="match status" value="1"/>
</dbReference>
<dbReference type="HAMAP" id="MF_01345_B">
    <property type="entry name" value="Ribosomal_uS17_B"/>
    <property type="match status" value="1"/>
</dbReference>
<dbReference type="InterPro" id="IPR012340">
    <property type="entry name" value="NA-bd_OB-fold"/>
</dbReference>
<dbReference type="InterPro" id="IPR000266">
    <property type="entry name" value="Ribosomal_uS17"/>
</dbReference>
<dbReference type="InterPro" id="IPR019984">
    <property type="entry name" value="Ribosomal_uS17_bact/chlr"/>
</dbReference>
<dbReference type="NCBIfam" id="NF004123">
    <property type="entry name" value="PRK05610.1"/>
    <property type="match status" value="1"/>
</dbReference>
<dbReference type="NCBIfam" id="TIGR03635">
    <property type="entry name" value="uS17_bact"/>
    <property type="match status" value="1"/>
</dbReference>
<dbReference type="PANTHER" id="PTHR10744">
    <property type="entry name" value="40S RIBOSOMAL PROTEIN S11 FAMILY MEMBER"/>
    <property type="match status" value="1"/>
</dbReference>
<dbReference type="PANTHER" id="PTHR10744:SF1">
    <property type="entry name" value="SMALL RIBOSOMAL SUBUNIT PROTEIN US17M"/>
    <property type="match status" value="1"/>
</dbReference>
<dbReference type="Pfam" id="PF00366">
    <property type="entry name" value="Ribosomal_S17"/>
    <property type="match status" value="1"/>
</dbReference>
<dbReference type="PRINTS" id="PR00973">
    <property type="entry name" value="RIBOSOMALS17"/>
</dbReference>
<dbReference type="SUPFAM" id="SSF50249">
    <property type="entry name" value="Nucleic acid-binding proteins"/>
    <property type="match status" value="1"/>
</dbReference>
<proteinExistence type="inferred from homology"/>
<accession>Q3YRL8</accession>
<protein>
    <recommendedName>
        <fullName evidence="1">Small ribosomal subunit protein uS17</fullName>
    </recommendedName>
    <alternativeName>
        <fullName evidence="2">30S ribosomal protein S17</fullName>
    </alternativeName>
</protein>
<feature type="chain" id="PRO_0000233475" description="Small ribosomal subunit protein uS17">
    <location>
        <begin position="1"/>
        <end position="83"/>
    </location>
</feature>